<protein>
    <recommendedName>
        <fullName evidence="2 3">16S rRNA aminocarboxypropyltransferase</fullName>
        <ecNumber evidence="2">2.5.1.157</ecNumber>
    </recommendedName>
</protein>
<proteinExistence type="inferred from homology"/>
<feature type="chain" id="PRO_0000094416" description="16S rRNA aminocarboxypropyltransferase">
    <location>
        <begin position="1"/>
        <end position="165"/>
    </location>
</feature>
<feature type="binding site" evidence="1 2">
    <location>
        <position position="17"/>
    </location>
    <ligand>
        <name>S-adenosyl-L-methionine</name>
        <dbReference type="ChEBI" id="CHEBI:59789"/>
    </ligand>
</feature>
<feature type="binding site" evidence="2">
    <location>
        <position position="62"/>
    </location>
    <ligand>
        <name>S-adenosyl-L-methionine</name>
        <dbReference type="ChEBI" id="CHEBI:59789"/>
    </ligand>
</feature>
<feature type="binding site" evidence="1 2">
    <location>
        <position position="83"/>
    </location>
    <ligand>
        <name>S-adenosyl-L-methionine</name>
        <dbReference type="ChEBI" id="CHEBI:59789"/>
    </ligand>
</feature>
<feature type="binding site" evidence="1 2">
    <location>
        <position position="102"/>
    </location>
    <ligand>
        <name>S-adenosyl-L-methionine</name>
        <dbReference type="ChEBI" id="CHEBI:59789"/>
    </ligand>
</feature>
<comment type="function">
    <text evidence="2">Aminocarboxypropyltransferase that catalyzes the aminocarboxypropyl transfer on pseudouridine corresponding to position 914 in M.jannaschii 16S rRNA. It constitutes the last step in biosynthesis of the hypermodified N1-methyl-N3-(3-amino-3-carboxypropyl) pseudouridine (m1acp3-Psi).</text>
</comment>
<comment type="catalytic activity">
    <reaction evidence="2">
        <text>an N(1)-methylpseudouridine in rRNA + S-adenosyl-L-methionine = N(1)-methyl-N(3)-[(3S)-3-amino-3-carboxypropyl]pseudouridine in rRNA + S-methyl-5'-thioadenosine + H(+)</text>
        <dbReference type="Rhea" id="RHEA:63296"/>
        <dbReference type="Rhea" id="RHEA-COMP:11634"/>
        <dbReference type="Rhea" id="RHEA-COMP:16310"/>
        <dbReference type="ChEBI" id="CHEBI:15378"/>
        <dbReference type="ChEBI" id="CHEBI:17509"/>
        <dbReference type="ChEBI" id="CHEBI:59789"/>
        <dbReference type="ChEBI" id="CHEBI:74890"/>
        <dbReference type="ChEBI" id="CHEBI:146234"/>
        <dbReference type="EC" id="2.5.1.157"/>
    </reaction>
</comment>
<comment type="subcellular location">
    <subcellularLocation>
        <location evidence="2">Cytoplasm</location>
    </subcellularLocation>
</comment>
<comment type="similarity">
    <text evidence="2">Belongs to the TDD superfamily. TSR3 family.</text>
</comment>
<comment type="sequence caution" evidence="3">
    <conflict type="erroneous initiation">
        <sequence resource="EMBL-CDS" id="AAG20224"/>
    </conflict>
    <text>Extended N-terminus.</text>
</comment>
<accession>Q9HNJ6</accession>
<keyword id="KW-0963">Cytoplasm</keyword>
<keyword id="KW-1185">Reference proteome</keyword>
<keyword id="KW-0690">Ribosome biogenesis</keyword>
<keyword id="KW-0698">rRNA processing</keyword>
<keyword id="KW-0949">S-adenosyl-L-methionine</keyword>
<keyword id="KW-0808">Transferase</keyword>
<dbReference type="EC" id="2.5.1.157" evidence="2"/>
<dbReference type="EMBL" id="AE004437">
    <property type="protein sequence ID" value="AAG20224.1"/>
    <property type="status" value="ALT_INIT"/>
    <property type="molecule type" value="Genomic_DNA"/>
</dbReference>
<dbReference type="PIR" id="D84357">
    <property type="entry name" value="D84357"/>
</dbReference>
<dbReference type="RefSeq" id="WP_012289427.1">
    <property type="nucleotide sequence ID" value="NC_002607.1"/>
</dbReference>
<dbReference type="SMR" id="Q9HNJ6"/>
<dbReference type="FunCoup" id="Q9HNJ6">
    <property type="interactions" value="82"/>
</dbReference>
<dbReference type="STRING" id="64091.VNG_2075C"/>
<dbReference type="PaxDb" id="64091-VNG_2075C"/>
<dbReference type="KEGG" id="hal:VNG_2075C"/>
<dbReference type="PATRIC" id="fig|64091.14.peg.1582"/>
<dbReference type="HOGENOM" id="CLU_035060_4_1_2"/>
<dbReference type="InParanoid" id="Q9HNJ6"/>
<dbReference type="OrthoDB" id="7441at2157"/>
<dbReference type="PhylomeDB" id="Q9HNJ6"/>
<dbReference type="Proteomes" id="UP000000554">
    <property type="component" value="Chromosome"/>
</dbReference>
<dbReference type="GO" id="GO:0005737">
    <property type="term" value="C:cytoplasm"/>
    <property type="evidence" value="ECO:0007669"/>
    <property type="project" value="UniProtKB-SubCell"/>
</dbReference>
<dbReference type="GO" id="GO:0106388">
    <property type="term" value="F:18S rRNA aminocarboxypropyltransferase activity"/>
    <property type="evidence" value="ECO:0007669"/>
    <property type="project" value="InterPro"/>
</dbReference>
<dbReference type="GO" id="GO:1904047">
    <property type="term" value="F:S-adenosyl-L-methionine binding"/>
    <property type="evidence" value="ECO:0007669"/>
    <property type="project" value="UniProtKB-UniRule"/>
</dbReference>
<dbReference type="GO" id="GO:0000455">
    <property type="term" value="P:enzyme-directed rRNA pseudouridine synthesis"/>
    <property type="evidence" value="ECO:0007669"/>
    <property type="project" value="UniProtKB-UniRule"/>
</dbReference>
<dbReference type="HAMAP" id="MF_01116">
    <property type="entry name" value="TSR3"/>
    <property type="match status" value="1"/>
</dbReference>
<dbReference type="InterPro" id="IPR007209">
    <property type="entry name" value="RNaseL-inhib-like_metal-bd_dom"/>
</dbReference>
<dbReference type="InterPro" id="IPR022968">
    <property type="entry name" value="Tsr3-like"/>
</dbReference>
<dbReference type="InterPro" id="IPR007177">
    <property type="entry name" value="Tsr3_C"/>
</dbReference>
<dbReference type="NCBIfam" id="NF002621">
    <property type="entry name" value="PRK02287.1"/>
    <property type="match status" value="1"/>
</dbReference>
<dbReference type="PANTHER" id="PTHR20426:SF0">
    <property type="entry name" value="18S RRNA AMINOCARBOXYPROPYLTRANSFERASE"/>
    <property type="match status" value="1"/>
</dbReference>
<dbReference type="PANTHER" id="PTHR20426">
    <property type="entry name" value="RIBOSOME BIOGENESIS PROTEIN TSR3 HOMOLOG"/>
    <property type="match status" value="1"/>
</dbReference>
<dbReference type="Pfam" id="PF04068">
    <property type="entry name" value="Fer4_RLI"/>
    <property type="match status" value="1"/>
</dbReference>
<dbReference type="Pfam" id="PF04034">
    <property type="entry name" value="Ribo_biogen_C"/>
    <property type="match status" value="1"/>
</dbReference>
<reference key="1">
    <citation type="journal article" date="2000" name="Proc. Natl. Acad. Sci. U.S.A.">
        <title>Genome sequence of Halobacterium species NRC-1.</title>
        <authorList>
            <person name="Ng W.V."/>
            <person name="Kennedy S.P."/>
            <person name="Mahairas G.G."/>
            <person name="Berquist B."/>
            <person name="Pan M."/>
            <person name="Shukla H.D."/>
            <person name="Lasky S.R."/>
            <person name="Baliga N.S."/>
            <person name="Thorsson V."/>
            <person name="Sbrogna J."/>
            <person name="Swartzell S."/>
            <person name="Weir D."/>
            <person name="Hall J."/>
            <person name="Dahl T.A."/>
            <person name="Welti R."/>
            <person name="Goo Y.A."/>
            <person name="Leithauser B."/>
            <person name="Keller K."/>
            <person name="Cruz R."/>
            <person name="Danson M.J."/>
            <person name="Hough D.W."/>
            <person name="Maddocks D.G."/>
            <person name="Jablonski P.E."/>
            <person name="Krebs M.P."/>
            <person name="Angevine C.M."/>
            <person name="Dale H."/>
            <person name="Isenbarger T.A."/>
            <person name="Peck R.F."/>
            <person name="Pohlschroder M."/>
            <person name="Spudich J.L."/>
            <person name="Jung K.-H."/>
            <person name="Alam M."/>
            <person name="Freitas T."/>
            <person name="Hou S."/>
            <person name="Daniels C.J."/>
            <person name="Dennis P.P."/>
            <person name="Omer A.D."/>
            <person name="Ebhardt H."/>
            <person name="Lowe T.M."/>
            <person name="Liang P."/>
            <person name="Riley M."/>
            <person name="Hood L."/>
            <person name="DasSarma S."/>
        </authorList>
    </citation>
    <scope>NUCLEOTIDE SEQUENCE [LARGE SCALE GENOMIC DNA]</scope>
    <source>
        <strain>ATCC 700922 / JCM 11081 / NRC-1</strain>
    </source>
</reference>
<evidence type="ECO:0000250" key="1">
    <source>
        <dbReference type="UniProtKB" id="E1QU22"/>
    </source>
</evidence>
<evidence type="ECO:0000255" key="2">
    <source>
        <dbReference type="HAMAP-Rule" id="MF_01116"/>
    </source>
</evidence>
<evidence type="ECO:0000305" key="3"/>
<gene>
    <name type="ordered locus">VNG_2075C</name>
</gene>
<name>TSR3_HALSA</name>
<sequence>MELHVRYEGDDDPEKCTARKLARFDLAALHRTGRETPAGVVLNPHAERALSPADDTDMLVALDCSWETAGRAMFEIDGEHRALPFLVAANPVNYGQPFQLNTVEAFAGALAILGRWERAEELLSKFTWGHTFLELNEEPLRRYADCEDSSEVVAVQQAYLDAGED</sequence>
<organism>
    <name type="scientific">Halobacterium salinarum (strain ATCC 700922 / JCM 11081 / NRC-1)</name>
    <name type="common">Halobacterium halobium</name>
    <dbReference type="NCBI Taxonomy" id="64091"/>
    <lineage>
        <taxon>Archaea</taxon>
        <taxon>Methanobacteriati</taxon>
        <taxon>Methanobacteriota</taxon>
        <taxon>Stenosarchaea group</taxon>
        <taxon>Halobacteria</taxon>
        <taxon>Halobacteriales</taxon>
        <taxon>Halobacteriaceae</taxon>
        <taxon>Halobacterium</taxon>
        <taxon>Halobacterium salinarum NRC-34001</taxon>
    </lineage>
</organism>